<organism>
    <name type="scientific">Drosophila melanogaster</name>
    <name type="common">Fruit fly</name>
    <dbReference type="NCBI Taxonomy" id="7227"/>
    <lineage>
        <taxon>Eukaryota</taxon>
        <taxon>Metazoa</taxon>
        <taxon>Ecdysozoa</taxon>
        <taxon>Arthropoda</taxon>
        <taxon>Hexapoda</taxon>
        <taxon>Insecta</taxon>
        <taxon>Pterygota</taxon>
        <taxon>Neoptera</taxon>
        <taxon>Endopterygota</taxon>
        <taxon>Diptera</taxon>
        <taxon>Brachycera</taxon>
        <taxon>Muscomorpha</taxon>
        <taxon>Ephydroidea</taxon>
        <taxon>Drosophilidae</taxon>
        <taxon>Drosophila</taxon>
        <taxon>Sophophora</taxon>
    </lineage>
</organism>
<keyword id="KW-0002">3D-structure</keyword>
<keyword id="KW-0025">Alternative splicing</keyword>
<keyword id="KW-0963">Cytoplasm</keyword>
<keyword id="KW-0217">Developmental protein</keyword>
<keyword id="KW-0914">Notch signaling pathway</keyword>
<keyword id="KW-1185">Reference proteome</keyword>
<keyword id="KW-0677">Repeat</keyword>
<keyword id="KW-0808">Transferase</keyword>
<keyword id="KW-0833">Ubl conjugation pathway</keyword>
<name>NEDD4_DROME</name>
<protein>
    <recommendedName>
        <fullName>E3 ubiquitin-protein ligase Nedd-4</fullName>
        <shortName>DNedd4</shortName>
        <ecNumber evidence="1">2.3.2.26</ecNumber>
    </recommendedName>
    <alternativeName>
        <fullName>HECT-type E3 ubiquitin transferase NEDD4</fullName>
    </alternativeName>
</protein>
<sequence>MSARSSGLVAAAALPVPSSSSSVAGGDVPRPPPRRRAASVAGQQQTRQEFGNGYTPRRSLAAVNDSGDSCHLRIVVLTGQSLAKKDIFGASDPYVRIDLNTINGDINIDSVLTKTKKKTLNPTWNEEFIFRVKPSEHKLVFQVFDENRLTRDDFLGMVELTLVNLPTEQEGRTIGEQSYTLRPRRSVGAKSRIKGTLRIYHAFIRETREQSEPSSGNSDGEWEHVEATNAGETSAQPHPFPTGGHDALPAGWEERQDANGRTYYVNHTARTTQWDRPTVLNSHSSQSTDDQLASDFQRRFHISVDDTESGRSADSISHNSIEDNNNAAGLAYTPKTAATSSAPPNTPTNNNGILAQIAMQYRAEEDQDPTVDHTSFVYNSLRHPVAHRQPEISATSLQNDLRPVREAPGVPDIAITNPFTRRAAGNMAGGAGWQQERRRQQMQLHIQQHQQRQQQQQQNRILLDVDHRQQEPQHRGQRHQQQHRPSNEDTDHTDSHNPSDISAPSTRRNSEEDNAAVPPMEQNTGGEEEPLPPRWSMQVAPNGRTFFIDHASRRTTWIDPRNGRASPMPNQTRRVEDDLGPLPEGWEERVHTDGRVFYIDHNTRTTQWEDPRLSNPNIAGQAVPYSRDYKQKYEYFKSHIRKPTNVPNKFEIRIRRTSILEDSYRIISSVTKTDLLKTKLWVEFEGETGLDYGGLAREWFYLLSKEMFNPYYGLFEYSAMDNYTLQINNGSGLCNEEHLSYFKFIGRIAGMAVYHGKLLDAFFIRPFYKMMLQKPIDLKDMESVDTEYYNSLMWIKENDPRILELTFCLDEDVFGQKSQHELKPGGANIDVTNENKDEYIKLVIEWRFVARVKEQMSSFLDGFGSIIPLNLIKIFDEHELELLMCGIQNIDVKDWRENTLYKGDYHMNHIIIQWFWRAVLSFSNEMRSRLLQFVTGTSRVPMNGFKELYGSNGPQMFTIEKWGTPNNFPRAHTCFNRLDLPPYEGYLQLKDKLIKAIEGSQGFAGVD</sequence>
<feature type="chain" id="PRO_0000120322" description="E3 ubiquitin-protein ligase Nedd-4">
    <location>
        <begin position="1"/>
        <end position="1007"/>
    </location>
</feature>
<feature type="domain" description="C2" evidence="2">
    <location>
        <begin position="52"/>
        <end position="175"/>
    </location>
</feature>
<feature type="domain" description="WW 1" evidence="4">
    <location>
        <begin position="246"/>
        <end position="279"/>
    </location>
</feature>
<feature type="domain" description="WW 2" evidence="4">
    <location>
        <begin position="529"/>
        <end position="562"/>
    </location>
</feature>
<feature type="domain" description="WW 3" evidence="4">
    <location>
        <begin position="580"/>
        <end position="613"/>
    </location>
</feature>
<feature type="domain" description="HECT" evidence="3">
    <location>
        <begin position="672"/>
        <end position="1006"/>
    </location>
</feature>
<feature type="region of interest" description="Disordered" evidence="5">
    <location>
        <begin position="15"/>
        <end position="58"/>
    </location>
</feature>
<feature type="region of interest" description="Disordered" evidence="5">
    <location>
        <begin position="303"/>
        <end position="327"/>
    </location>
</feature>
<feature type="region of interest" description="Disordered" evidence="5">
    <location>
        <begin position="394"/>
        <end position="539"/>
    </location>
</feature>
<feature type="region of interest" description="Disordered" evidence="5">
    <location>
        <begin position="558"/>
        <end position="586"/>
    </location>
</feature>
<feature type="compositionally biased region" description="Low complexity" evidence="5">
    <location>
        <begin position="15"/>
        <end position="26"/>
    </location>
</feature>
<feature type="compositionally biased region" description="Polar residues" evidence="5">
    <location>
        <begin position="312"/>
        <end position="327"/>
    </location>
</feature>
<feature type="compositionally biased region" description="Low complexity" evidence="5">
    <location>
        <begin position="441"/>
        <end position="462"/>
    </location>
</feature>
<feature type="compositionally biased region" description="Basic and acidic residues" evidence="5">
    <location>
        <begin position="463"/>
        <end position="474"/>
    </location>
</feature>
<feature type="compositionally biased region" description="Basic and acidic residues" evidence="5">
    <location>
        <begin position="485"/>
        <end position="497"/>
    </location>
</feature>
<feature type="compositionally biased region" description="Polar residues" evidence="5">
    <location>
        <begin position="498"/>
        <end position="507"/>
    </location>
</feature>
<feature type="active site" description="Glycyl thioester intermediate">
    <location>
        <position position="974"/>
    </location>
</feature>
<feature type="splice variant" id="VSP_015440" description="In isoform 2 and isoform 4." evidence="11">
    <location>
        <begin position="1"/>
        <end position="38"/>
    </location>
</feature>
<feature type="splice variant" id="VSP_015441" description="In isoform 2 and isoform 4." evidence="11">
    <original>SVAGQQQTRQEFGNGYTPRRSLAAV</original>
    <variation>MAESTTTSPSVTSEDGQIHGCNNSD</variation>
    <location>
        <begin position="39"/>
        <end position="63"/>
    </location>
</feature>
<feature type="splice variant" id="VSP_015442" description="In isoform 3 and isoform 4." evidence="11">
    <location>
        <begin position="314"/>
        <end position="486"/>
    </location>
</feature>
<feature type="splice variant" id="VSP_015443" description="In isoform 2." evidence="11">
    <location>
        <begin position="375"/>
        <end position="387"/>
    </location>
</feature>
<feature type="mutagenesis site" description="Abolishes activity; no effect on interaction with comm." evidence="6">
    <original>C</original>
    <variation>A</variation>
    <location>
        <position position="974"/>
    </location>
</feature>
<feature type="sequence conflict" description="In Ref. 2; AAS64973." evidence="12" ref="2">
    <original>RSVG</original>
    <variation>S</variation>
    <location>
        <begin position="185"/>
        <end position="188"/>
    </location>
</feature>
<feature type="strand" evidence="15">
    <location>
        <begin position="535"/>
        <end position="539"/>
    </location>
</feature>
<feature type="strand" evidence="15">
    <location>
        <begin position="543"/>
        <end position="549"/>
    </location>
</feature>
<feature type="turn" evidence="15">
    <location>
        <begin position="550"/>
        <end position="553"/>
    </location>
</feature>
<feature type="strand" evidence="15">
    <location>
        <begin position="554"/>
        <end position="558"/>
    </location>
</feature>
<feature type="turn" evidence="15">
    <location>
        <begin position="560"/>
        <end position="562"/>
    </location>
</feature>
<accession>Q9VVI3</accession>
<accession>Q7KUR2</accession>
<accession>Q8IQR6</accession>
<accession>Q95R64</accession>
<accession>Q95TQ0</accession>
<accession>Q95ZF9</accession>
<dbReference type="EC" id="2.3.2.26" evidence="1"/>
<dbReference type="EMBL" id="AJ278468">
    <property type="protein sequence ID" value="CAC42101.1"/>
    <property type="molecule type" value="mRNA"/>
</dbReference>
<dbReference type="EMBL" id="AE014296">
    <property type="protein sequence ID" value="AAF49328.2"/>
    <property type="molecule type" value="Genomic_DNA"/>
</dbReference>
<dbReference type="EMBL" id="AE014296">
    <property type="protein sequence ID" value="AAS64973.1"/>
    <property type="molecule type" value="Genomic_DNA"/>
</dbReference>
<dbReference type="EMBL" id="AE014296">
    <property type="protein sequence ID" value="AAN11694.1"/>
    <property type="molecule type" value="Genomic_DNA"/>
</dbReference>
<dbReference type="EMBL" id="AE014296">
    <property type="protein sequence ID" value="AAN11695.1"/>
    <property type="molecule type" value="Genomic_DNA"/>
</dbReference>
<dbReference type="EMBL" id="AY061595">
    <property type="protein sequence ID" value="AAL29143.1"/>
    <property type="molecule type" value="mRNA"/>
</dbReference>
<dbReference type="EMBL" id="AY058619">
    <property type="protein sequence ID" value="AAL13848.1"/>
    <property type="status" value="ALT_INIT"/>
    <property type="molecule type" value="mRNA"/>
</dbReference>
<dbReference type="RefSeq" id="NP_648993.1">
    <molecule id="Q9VVI3-1"/>
    <property type="nucleotide sequence ID" value="NM_140736.3"/>
</dbReference>
<dbReference type="RefSeq" id="NP_730282.1">
    <molecule id="Q9VVI3-3"/>
    <property type="nucleotide sequence ID" value="NM_168736.4"/>
</dbReference>
<dbReference type="RefSeq" id="NP_730283.1">
    <molecule id="Q9VVI3-2"/>
    <property type="nucleotide sequence ID" value="NM_168737.2"/>
</dbReference>
<dbReference type="RefSeq" id="NP_996116.1">
    <property type="nucleotide sequence ID" value="NM_206394.2"/>
</dbReference>
<dbReference type="PDB" id="2EZ5">
    <property type="method" value="NMR"/>
    <property type="chains" value="W=526-566"/>
</dbReference>
<dbReference type="PDBsum" id="2EZ5"/>
<dbReference type="SMR" id="Q9VVI3"/>
<dbReference type="BioGRID" id="65246">
    <property type="interactions" value="19"/>
</dbReference>
<dbReference type="DIP" id="DIP-29040N"/>
<dbReference type="FunCoup" id="Q9VVI3">
    <property type="interactions" value="1134"/>
</dbReference>
<dbReference type="IntAct" id="Q9VVI3">
    <property type="interactions" value="15"/>
</dbReference>
<dbReference type="STRING" id="7227.FBpp0289746"/>
<dbReference type="TCDB" id="8.A.30.1.5">
    <property type="family name" value="the nedd4-family interacting protein-2 (nedd4) family"/>
</dbReference>
<dbReference type="PaxDb" id="7227-FBpp0289746"/>
<dbReference type="DNASU" id="39958"/>
<dbReference type="EnsemblMetazoa" id="FBtr0299645">
    <molecule id="Q9VVI3-2"/>
    <property type="protein sequence ID" value="FBpp0288920"/>
    <property type="gene ID" value="FBgn0259174"/>
</dbReference>
<dbReference type="EnsemblMetazoa" id="FBtr0300519">
    <molecule id="Q9VVI3-1"/>
    <property type="protein sequence ID" value="FBpp0289746"/>
    <property type="gene ID" value="FBgn0259174"/>
</dbReference>
<dbReference type="EnsemblMetazoa" id="FBtr0300520">
    <molecule id="Q9VVI3-3"/>
    <property type="protein sequence ID" value="FBpp0289747"/>
    <property type="gene ID" value="FBgn0259174"/>
</dbReference>
<dbReference type="GeneID" id="39958"/>
<dbReference type="KEGG" id="dme:Dmel_CG42279"/>
<dbReference type="UCSC" id="CG42279-RC">
    <molecule id="Q9VVI3-1"/>
    <property type="organism name" value="d. melanogaster"/>
</dbReference>
<dbReference type="AGR" id="FB:FBgn0259174"/>
<dbReference type="CTD" id="4734"/>
<dbReference type="FlyBase" id="FBgn0259174">
    <property type="gene designation" value="Nedd4"/>
</dbReference>
<dbReference type="VEuPathDB" id="VectorBase:FBgn0259174"/>
<dbReference type="eggNOG" id="KOG0940">
    <property type="taxonomic scope" value="Eukaryota"/>
</dbReference>
<dbReference type="GeneTree" id="ENSGT00940000168483"/>
<dbReference type="InParanoid" id="Q9VVI3"/>
<dbReference type="OrthoDB" id="423283at2759"/>
<dbReference type="PhylomeDB" id="Q9VVI3"/>
<dbReference type="Reactome" id="R-DME-1169408">
    <property type="pathway name" value="ISG15 antiviral mechanism"/>
</dbReference>
<dbReference type="Reactome" id="R-DME-1253288">
    <property type="pathway name" value="Downregulation of ERBB4 signaling"/>
</dbReference>
<dbReference type="Reactome" id="R-DME-2173795">
    <property type="pathway name" value="Downregulation of SMAD2/3:SMAD4 transcriptional activity"/>
</dbReference>
<dbReference type="Reactome" id="R-DME-8948747">
    <property type="pathway name" value="Regulation of PTEN localization"/>
</dbReference>
<dbReference type="Reactome" id="R-DME-8948751">
    <property type="pathway name" value="Regulation of PTEN stability and activity"/>
</dbReference>
<dbReference type="Reactome" id="R-DME-983168">
    <property type="pathway name" value="Antigen processing: Ubiquitination &amp; Proteasome degradation"/>
</dbReference>
<dbReference type="SignaLink" id="Q9VVI3"/>
<dbReference type="UniPathway" id="UPA00143"/>
<dbReference type="BioGRID-ORCS" id="39958">
    <property type="hits" value="0 hits in 3 CRISPR screens"/>
</dbReference>
<dbReference type="ChiTaRS" id="Nedd4">
    <property type="organism name" value="fly"/>
</dbReference>
<dbReference type="EvolutionaryTrace" id="Q9VVI3"/>
<dbReference type="GenomeRNAi" id="39958"/>
<dbReference type="PRO" id="PR:Q9VVI3"/>
<dbReference type="Proteomes" id="UP000000803">
    <property type="component" value="Chromosome 3L"/>
</dbReference>
<dbReference type="Bgee" id="FBgn0259174">
    <property type="expression patterns" value="Expressed in enterocyte of posterior adult midgut epithelium (Drosophila) in digestive tract and 258 other cell types or tissues"/>
</dbReference>
<dbReference type="ExpressionAtlas" id="Q9VVI3">
    <property type="expression patterns" value="baseline and differential"/>
</dbReference>
<dbReference type="GO" id="GO:0005737">
    <property type="term" value="C:cytoplasm"/>
    <property type="evidence" value="ECO:0000314"/>
    <property type="project" value="UniProtKB"/>
</dbReference>
<dbReference type="GO" id="GO:0005886">
    <property type="term" value="C:plasma membrane"/>
    <property type="evidence" value="ECO:0000314"/>
    <property type="project" value="FlyBase"/>
</dbReference>
<dbReference type="GO" id="GO:0071212">
    <property type="term" value="C:subsynaptic reticulum"/>
    <property type="evidence" value="ECO:0000315"/>
    <property type="project" value="FlyBase"/>
</dbReference>
<dbReference type="GO" id="GO:0017022">
    <property type="term" value="F:myosin binding"/>
    <property type="evidence" value="ECO:0000353"/>
    <property type="project" value="FlyBase"/>
</dbReference>
<dbReference type="GO" id="GO:0005112">
    <property type="term" value="F:Notch binding"/>
    <property type="evidence" value="ECO:0000353"/>
    <property type="project" value="UniProtKB"/>
</dbReference>
<dbReference type="GO" id="GO:0019904">
    <property type="term" value="F:protein domain specific binding"/>
    <property type="evidence" value="ECO:0000314"/>
    <property type="project" value="FlyBase"/>
</dbReference>
<dbReference type="GO" id="GO:0019871">
    <property type="term" value="F:sodium channel inhibitor activity"/>
    <property type="evidence" value="ECO:0000318"/>
    <property type="project" value="GO_Central"/>
</dbReference>
<dbReference type="GO" id="GO:0061630">
    <property type="term" value="F:ubiquitin protein ligase activity"/>
    <property type="evidence" value="ECO:0000314"/>
    <property type="project" value="FlyBase"/>
</dbReference>
<dbReference type="GO" id="GO:0004842">
    <property type="term" value="F:ubiquitin-protein transferase activity"/>
    <property type="evidence" value="ECO:0000303"/>
    <property type="project" value="UniProtKB"/>
</dbReference>
<dbReference type="GO" id="GO:0007411">
    <property type="term" value="P:axon guidance"/>
    <property type="evidence" value="ECO:0000315"/>
    <property type="project" value="FlyBase"/>
</dbReference>
<dbReference type="GO" id="GO:0016199">
    <property type="term" value="P:axon midline choice point recognition"/>
    <property type="evidence" value="ECO:0000315"/>
    <property type="project" value="UniProtKB"/>
</dbReference>
<dbReference type="GO" id="GO:0008586">
    <property type="term" value="P:imaginal disc-derived wing vein morphogenesis"/>
    <property type="evidence" value="ECO:0000315"/>
    <property type="project" value="BHF-UCL"/>
</dbReference>
<dbReference type="GO" id="GO:0045746">
    <property type="term" value="P:negative regulation of Notch signaling pathway"/>
    <property type="evidence" value="ECO:0000314"/>
    <property type="project" value="FlyBase"/>
</dbReference>
<dbReference type="GO" id="GO:0045879">
    <property type="term" value="P:negative regulation of smoothened signaling pathway"/>
    <property type="evidence" value="ECO:0000316"/>
    <property type="project" value="FlyBase"/>
</dbReference>
<dbReference type="GO" id="GO:0007528">
    <property type="term" value="P:neuromuscular junction development"/>
    <property type="evidence" value="ECO:0000315"/>
    <property type="project" value="FlyBase"/>
</dbReference>
<dbReference type="GO" id="GO:0007219">
    <property type="term" value="P:Notch signaling pathway"/>
    <property type="evidence" value="ECO:0007669"/>
    <property type="project" value="UniProtKB-KW"/>
</dbReference>
<dbReference type="GO" id="GO:1905306">
    <property type="term" value="P:positive regulation of cardiac myofibril assembly"/>
    <property type="evidence" value="ECO:0000315"/>
    <property type="project" value="BHF-UCL"/>
</dbReference>
<dbReference type="GO" id="GO:1905062">
    <property type="term" value="P:positive regulation of cardioblast proliferation"/>
    <property type="evidence" value="ECO:0000315"/>
    <property type="project" value="BHF-UCL"/>
</dbReference>
<dbReference type="GO" id="GO:0045807">
    <property type="term" value="P:positive regulation of endocytosis"/>
    <property type="evidence" value="ECO:0000315"/>
    <property type="project" value="FlyBase"/>
</dbReference>
<dbReference type="GO" id="GO:0045732">
    <property type="term" value="P:positive regulation of protein catabolic process"/>
    <property type="evidence" value="ECO:0000315"/>
    <property type="project" value="FlyBase"/>
</dbReference>
<dbReference type="GO" id="GO:0002092">
    <property type="term" value="P:positive regulation of receptor internalization"/>
    <property type="evidence" value="ECO:0000315"/>
    <property type="project" value="FlyBase"/>
</dbReference>
<dbReference type="GO" id="GO:0051965">
    <property type="term" value="P:positive regulation of synapse assembly"/>
    <property type="evidence" value="ECO:0000315"/>
    <property type="project" value="FlyBase"/>
</dbReference>
<dbReference type="GO" id="GO:0016567">
    <property type="term" value="P:protein ubiquitination"/>
    <property type="evidence" value="ECO:0000314"/>
    <property type="project" value="FlyBase"/>
</dbReference>
<dbReference type="GO" id="GO:0031623">
    <property type="term" value="P:receptor internalization"/>
    <property type="evidence" value="ECO:0000315"/>
    <property type="project" value="UniProtKB"/>
</dbReference>
<dbReference type="GO" id="GO:0048814">
    <property type="term" value="P:regulation of dendrite morphogenesis"/>
    <property type="evidence" value="ECO:0000318"/>
    <property type="project" value="GO_Central"/>
</dbReference>
<dbReference type="GO" id="GO:0006511">
    <property type="term" value="P:ubiquitin-dependent protein catabolic process"/>
    <property type="evidence" value="ECO:0000318"/>
    <property type="project" value="GO_Central"/>
</dbReference>
<dbReference type="CDD" id="cd04033">
    <property type="entry name" value="C2_NEDD4_NEDD4L"/>
    <property type="match status" value="1"/>
</dbReference>
<dbReference type="CDD" id="cd00078">
    <property type="entry name" value="HECTc"/>
    <property type="match status" value="1"/>
</dbReference>
<dbReference type="CDD" id="cd00201">
    <property type="entry name" value="WW"/>
    <property type="match status" value="3"/>
</dbReference>
<dbReference type="FunFam" id="2.20.70.10:FF:000005">
    <property type="entry name" value="E3 ubiquitin-protein ligase"/>
    <property type="match status" value="1"/>
</dbReference>
<dbReference type="FunFam" id="2.60.40.150:FF:000096">
    <property type="entry name" value="E3 ubiquitin-protein ligase Nedd-4"/>
    <property type="match status" value="1"/>
</dbReference>
<dbReference type="FunFam" id="2.20.70.10:FF:000037">
    <property type="entry name" value="E3 ubiquitin-protein ligase nedd-4"/>
    <property type="match status" value="1"/>
</dbReference>
<dbReference type="FunFam" id="2.20.70.10:FF:000021">
    <property type="entry name" value="E3 ubiquitin-protein ligase NEDD4"/>
    <property type="match status" value="1"/>
</dbReference>
<dbReference type="FunFam" id="3.30.2160.10:FF:000001">
    <property type="entry name" value="E3 ubiquitin-protein ligase NEDD4-like"/>
    <property type="match status" value="1"/>
</dbReference>
<dbReference type="FunFam" id="3.30.2410.10:FF:000001">
    <property type="entry name" value="E3 ubiquitin-protein ligase NEDD4-like"/>
    <property type="match status" value="1"/>
</dbReference>
<dbReference type="FunFam" id="3.90.1750.10:FF:000001">
    <property type="entry name" value="E3 ubiquitin-protein ligase NEDD4-like"/>
    <property type="match status" value="1"/>
</dbReference>
<dbReference type="Gene3D" id="2.20.70.10">
    <property type="match status" value="2"/>
</dbReference>
<dbReference type="Gene3D" id="2.60.40.150">
    <property type="entry name" value="C2 domain"/>
    <property type="match status" value="1"/>
</dbReference>
<dbReference type="Gene3D" id="3.30.2160.10">
    <property type="entry name" value="Hect, E3 ligase catalytic domain"/>
    <property type="match status" value="1"/>
</dbReference>
<dbReference type="Gene3D" id="3.30.2410.10">
    <property type="entry name" value="Hect, E3 ligase catalytic domain"/>
    <property type="match status" value="1"/>
</dbReference>
<dbReference type="Gene3D" id="3.90.1750.10">
    <property type="entry name" value="Hect, E3 ligase catalytic domains"/>
    <property type="match status" value="1"/>
</dbReference>
<dbReference type="InterPro" id="IPR000008">
    <property type="entry name" value="C2_dom"/>
</dbReference>
<dbReference type="InterPro" id="IPR035892">
    <property type="entry name" value="C2_domain_sf"/>
</dbReference>
<dbReference type="InterPro" id="IPR024928">
    <property type="entry name" value="E3_ub_ligase_SMURF1"/>
</dbReference>
<dbReference type="InterPro" id="IPR050409">
    <property type="entry name" value="E3_ubiq-protein_ligase"/>
</dbReference>
<dbReference type="InterPro" id="IPR000569">
    <property type="entry name" value="HECT_dom"/>
</dbReference>
<dbReference type="InterPro" id="IPR035983">
    <property type="entry name" value="Hect_E3_ubiquitin_ligase"/>
</dbReference>
<dbReference type="InterPro" id="IPR001202">
    <property type="entry name" value="WW_dom"/>
</dbReference>
<dbReference type="InterPro" id="IPR036020">
    <property type="entry name" value="WW_dom_sf"/>
</dbReference>
<dbReference type="PANTHER" id="PTHR11254:SF440">
    <property type="entry name" value="E3 UBIQUITIN-PROTEIN LIGASE NEDD-4"/>
    <property type="match status" value="1"/>
</dbReference>
<dbReference type="PANTHER" id="PTHR11254">
    <property type="entry name" value="HECT DOMAIN UBIQUITIN-PROTEIN LIGASE"/>
    <property type="match status" value="1"/>
</dbReference>
<dbReference type="Pfam" id="PF00168">
    <property type="entry name" value="C2"/>
    <property type="match status" value="1"/>
</dbReference>
<dbReference type="Pfam" id="PF00632">
    <property type="entry name" value="HECT"/>
    <property type="match status" value="1"/>
</dbReference>
<dbReference type="Pfam" id="PF00397">
    <property type="entry name" value="WW"/>
    <property type="match status" value="3"/>
</dbReference>
<dbReference type="PIRSF" id="PIRSF001569">
    <property type="entry name" value="E3_ub_ligase_SMURF1"/>
    <property type="match status" value="1"/>
</dbReference>
<dbReference type="PRINTS" id="PR00360">
    <property type="entry name" value="C2DOMAIN"/>
</dbReference>
<dbReference type="SMART" id="SM00239">
    <property type="entry name" value="C2"/>
    <property type="match status" value="1"/>
</dbReference>
<dbReference type="SMART" id="SM00119">
    <property type="entry name" value="HECTc"/>
    <property type="match status" value="1"/>
</dbReference>
<dbReference type="SMART" id="SM00456">
    <property type="entry name" value="WW"/>
    <property type="match status" value="3"/>
</dbReference>
<dbReference type="SUPFAM" id="SSF49562">
    <property type="entry name" value="C2 domain (Calcium/lipid-binding domain, CaLB)"/>
    <property type="match status" value="1"/>
</dbReference>
<dbReference type="SUPFAM" id="SSF56204">
    <property type="entry name" value="Hect, E3 ligase catalytic domain"/>
    <property type="match status" value="1"/>
</dbReference>
<dbReference type="SUPFAM" id="SSF51045">
    <property type="entry name" value="WW domain"/>
    <property type="match status" value="3"/>
</dbReference>
<dbReference type="PROSITE" id="PS50004">
    <property type="entry name" value="C2"/>
    <property type="match status" value="1"/>
</dbReference>
<dbReference type="PROSITE" id="PS50237">
    <property type="entry name" value="HECT"/>
    <property type="match status" value="1"/>
</dbReference>
<dbReference type="PROSITE" id="PS01159">
    <property type="entry name" value="WW_DOMAIN_1"/>
    <property type="match status" value="3"/>
</dbReference>
<dbReference type="PROSITE" id="PS50020">
    <property type="entry name" value="WW_DOMAIN_2"/>
    <property type="match status" value="3"/>
</dbReference>
<evidence type="ECO:0000250" key="1">
    <source>
        <dbReference type="UniProtKB" id="P46934"/>
    </source>
</evidence>
<evidence type="ECO:0000255" key="2">
    <source>
        <dbReference type="PROSITE-ProRule" id="PRU00041"/>
    </source>
</evidence>
<evidence type="ECO:0000255" key="3">
    <source>
        <dbReference type="PROSITE-ProRule" id="PRU00104"/>
    </source>
</evidence>
<evidence type="ECO:0000255" key="4">
    <source>
        <dbReference type="PROSITE-ProRule" id="PRU00224"/>
    </source>
</evidence>
<evidence type="ECO:0000256" key="5">
    <source>
        <dbReference type="SAM" id="MobiDB-lite"/>
    </source>
</evidence>
<evidence type="ECO:0000269" key="6">
    <source>
    </source>
</evidence>
<evidence type="ECO:0000269" key="7">
    <source>
    </source>
</evidence>
<evidence type="ECO:0000269" key="8">
    <source>
    </source>
</evidence>
<evidence type="ECO:0000269" key="9">
    <source>
    </source>
</evidence>
<evidence type="ECO:0000269" key="10">
    <source>
    </source>
</evidence>
<evidence type="ECO:0000303" key="11">
    <source>
    </source>
</evidence>
<evidence type="ECO:0000305" key="12"/>
<evidence type="ECO:0000305" key="13">
    <source>
    </source>
</evidence>
<evidence type="ECO:0000305" key="14">
    <source>
    </source>
</evidence>
<evidence type="ECO:0007829" key="15">
    <source>
        <dbReference type="PDB" id="2EZ5"/>
    </source>
</evidence>
<proteinExistence type="evidence at protein level"/>
<gene>
    <name type="primary">Nedd4</name>
    <name type="ORF">CG7555</name>
</gene>
<reference key="1">
    <citation type="journal article" date="2002" name="Neuron">
        <title>Drosophila Nedd4, a ubiquitin ligase, is recruited by Commissureless to control cell surface levels of the roundabout receptor.</title>
        <authorList>
            <person name="Myat A."/>
            <person name="Henry P."/>
            <person name="McCabe V."/>
            <person name="Flintoft L."/>
            <person name="Rotin D."/>
            <person name="Tear G."/>
        </authorList>
    </citation>
    <scope>NUCLEOTIDE SEQUENCE [MRNA] (ISOFORM 1)</scope>
    <scope>FUNCTION</scope>
    <scope>INTERACTION WITH COMM</scope>
    <scope>MUTAGENESIS OF CYS-974</scope>
    <scope>TISSUE SPECIFICITY</scope>
    <source>
        <tissue>Embryo</tissue>
    </source>
</reference>
<reference key="2">
    <citation type="journal article" date="2000" name="Science">
        <title>The genome sequence of Drosophila melanogaster.</title>
        <authorList>
            <person name="Adams M.D."/>
            <person name="Celniker S.E."/>
            <person name="Holt R.A."/>
            <person name="Evans C.A."/>
            <person name="Gocayne J.D."/>
            <person name="Amanatides P.G."/>
            <person name="Scherer S.E."/>
            <person name="Li P.W."/>
            <person name="Hoskins R.A."/>
            <person name="Galle R.F."/>
            <person name="George R.A."/>
            <person name="Lewis S.E."/>
            <person name="Richards S."/>
            <person name="Ashburner M."/>
            <person name="Henderson S.N."/>
            <person name="Sutton G.G."/>
            <person name="Wortman J.R."/>
            <person name="Yandell M.D."/>
            <person name="Zhang Q."/>
            <person name="Chen L.X."/>
            <person name="Brandon R.C."/>
            <person name="Rogers Y.-H.C."/>
            <person name="Blazej R.G."/>
            <person name="Champe M."/>
            <person name="Pfeiffer B.D."/>
            <person name="Wan K.H."/>
            <person name="Doyle C."/>
            <person name="Baxter E.G."/>
            <person name="Helt G."/>
            <person name="Nelson C.R."/>
            <person name="Miklos G.L.G."/>
            <person name="Abril J.F."/>
            <person name="Agbayani A."/>
            <person name="An H.-J."/>
            <person name="Andrews-Pfannkoch C."/>
            <person name="Baldwin D."/>
            <person name="Ballew R.M."/>
            <person name="Basu A."/>
            <person name="Baxendale J."/>
            <person name="Bayraktaroglu L."/>
            <person name="Beasley E.M."/>
            <person name="Beeson K.Y."/>
            <person name="Benos P.V."/>
            <person name="Berman B.P."/>
            <person name="Bhandari D."/>
            <person name="Bolshakov S."/>
            <person name="Borkova D."/>
            <person name="Botchan M.R."/>
            <person name="Bouck J."/>
            <person name="Brokstein P."/>
            <person name="Brottier P."/>
            <person name="Burtis K.C."/>
            <person name="Busam D.A."/>
            <person name="Butler H."/>
            <person name="Cadieu E."/>
            <person name="Center A."/>
            <person name="Chandra I."/>
            <person name="Cherry J.M."/>
            <person name="Cawley S."/>
            <person name="Dahlke C."/>
            <person name="Davenport L.B."/>
            <person name="Davies P."/>
            <person name="de Pablos B."/>
            <person name="Delcher A."/>
            <person name="Deng Z."/>
            <person name="Mays A.D."/>
            <person name="Dew I."/>
            <person name="Dietz S.M."/>
            <person name="Dodson K."/>
            <person name="Doup L.E."/>
            <person name="Downes M."/>
            <person name="Dugan-Rocha S."/>
            <person name="Dunkov B.C."/>
            <person name="Dunn P."/>
            <person name="Durbin K.J."/>
            <person name="Evangelista C.C."/>
            <person name="Ferraz C."/>
            <person name="Ferriera S."/>
            <person name="Fleischmann W."/>
            <person name="Fosler C."/>
            <person name="Gabrielian A.E."/>
            <person name="Garg N.S."/>
            <person name="Gelbart W.M."/>
            <person name="Glasser K."/>
            <person name="Glodek A."/>
            <person name="Gong F."/>
            <person name="Gorrell J.H."/>
            <person name="Gu Z."/>
            <person name="Guan P."/>
            <person name="Harris M."/>
            <person name="Harris N.L."/>
            <person name="Harvey D.A."/>
            <person name="Heiman T.J."/>
            <person name="Hernandez J.R."/>
            <person name="Houck J."/>
            <person name="Hostin D."/>
            <person name="Houston K.A."/>
            <person name="Howland T.J."/>
            <person name="Wei M.-H."/>
            <person name="Ibegwam C."/>
            <person name="Jalali M."/>
            <person name="Kalush F."/>
            <person name="Karpen G.H."/>
            <person name="Ke Z."/>
            <person name="Kennison J.A."/>
            <person name="Ketchum K.A."/>
            <person name="Kimmel B.E."/>
            <person name="Kodira C.D."/>
            <person name="Kraft C.L."/>
            <person name="Kravitz S."/>
            <person name="Kulp D."/>
            <person name="Lai Z."/>
            <person name="Lasko P."/>
            <person name="Lei Y."/>
            <person name="Levitsky A.A."/>
            <person name="Li J.H."/>
            <person name="Li Z."/>
            <person name="Liang Y."/>
            <person name="Lin X."/>
            <person name="Liu X."/>
            <person name="Mattei B."/>
            <person name="McIntosh T.C."/>
            <person name="McLeod M.P."/>
            <person name="McPherson D."/>
            <person name="Merkulov G."/>
            <person name="Milshina N.V."/>
            <person name="Mobarry C."/>
            <person name="Morris J."/>
            <person name="Moshrefi A."/>
            <person name="Mount S.M."/>
            <person name="Moy M."/>
            <person name="Murphy B."/>
            <person name="Murphy L."/>
            <person name="Muzny D.M."/>
            <person name="Nelson D.L."/>
            <person name="Nelson D.R."/>
            <person name="Nelson K.A."/>
            <person name="Nixon K."/>
            <person name="Nusskern D.R."/>
            <person name="Pacleb J.M."/>
            <person name="Palazzolo M."/>
            <person name="Pittman G.S."/>
            <person name="Pan S."/>
            <person name="Pollard J."/>
            <person name="Puri V."/>
            <person name="Reese M.G."/>
            <person name="Reinert K."/>
            <person name="Remington K."/>
            <person name="Saunders R.D.C."/>
            <person name="Scheeler F."/>
            <person name="Shen H."/>
            <person name="Shue B.C."/>
            <person name="Siden-Kiamos I."/>
            <person name="Simpson M."/>
            <person name="Skupski M.P."/>
            <person name="Smith T.J."/>
            <person name="Spier E."/>
            <person name="Spradling A.C."/>
            <person name="Stapleton M."/>
            <person name="Strong R."/>
            <person name="Sun E."/>
            <person name="Svirskas R."/>
            <person name="Tector C."/>
            <person name="Turner R."/>
            <person name="Venter E."/>
            <person name="Wang A.H."/>
            <person name="Wang X."/>
            <person name="Wang Z.-Y."/>
            <person name="Wassarman D.A."/>
            <person name="Weinstock G.M."/>
            <person name="Weissenbach J."/>
            <person name="Williams S.M."/>
            <person name="Woodage T."/>
            <person name="Worley K.C."/>
            <person name="Wu D."/>
            <person name="Yang S."/>
            <person name="Yao Q.A."/>
            <person name="Ye J."/>
            <person name="Yeh R.-F."/>
            <person name="Zaveri J.S."/>
            <person name="Zhan M."/>
            <person name="Zhang G."/>
            <person name="Zhao Q."/>
            <person name="Zheng L."/>
            <person name="Zheng X.H."/>
            <person name="Zhong F.N."/>
            <person name="Zhong W."/>
            <person name="Zhou X."/>
            <person name="Zhu S.C."/>
            <person name="Zhu X."/>
            <person name="Smith H.O."/>
            <person name="Gibbs R.A."/>
            <person name="Myers E.W."/>
            <person name="Rubin G.M."/>
            <person name="Venter J.C."/>
        </authorList>
    </citation>
    <scope>NUCLEOTIDE SEQUENCE [LARGE SCALE GENOMIC DNA]</scope>
    <source>
        <strain>Berkeley</strain>
    </source>
</reference>
<reference key="3">
    <citation type="journal article" date="2002" name="Genome Biol.">
        <title>Annotation of the Drosophila melanogaster euchromatic genome: a systematic review.</title>
        <authorList>
            <person name="Misra S."/>
            <person name="Crosby M.A."/>
            <person name="Mungall C.J."/>
            <person name="Matthews B.B."/>
            <person name="Campbell K.S."/>
            <person name="Hradecky P."/>
            <person name="Huang Y."/>
            <person name="Kaminker J.S."/>
            <person name="Millburn G.H."/>
            <person name="Prochnik S.E."/>
            <person name="Smith C.D."/>
            <person name="Tupy J.L."/>
            <person name="Whitfield E.J."/>
            <person name="Bayraktaroglu L."/>
            <person name="Berman B.P."/>
            <person name="Bettencourt B.R."/>
            <person name="Celniker S.E."/>
            <person name="de Grey A.D.N.J."/>
            <person name="Drysdale R.A."/>
            <person name="Harris N.L."/>
            <person name="Richter J."/>
            <person name="Russo S."/>
            <person name="Schroeder A.J."/>
            <person name="Shu S.Q."/>
            <person name="Stapleton M."/>
            <person name="Yamada C."/>
            <person name="Ashburner M."/>
            <person name="Gelbart W.M."/>
            <person name="Rubin G.M."/>
            <person name="Lewis S.E."/>
        </authorList>
    </citation>
    <scope>GENOME REANNOTATION</scope>
    <scope>ALTERNATIVE SPLICING</scope>
    <source>
        <strain>Berkeley</strain>
    </source>
</reference>
<reference key="4">
    <citation type="journal article" date="2002" name="Genome Biol.">
        <title>A Drosophila full-length cDNA resource.</title>
        <authorList>
            <person name="Stapleton M."/>
            <person name="Carlson J.W."/>
            <person name="Brokstein P."/>
            <person name="Yu C."/>
            <person name="Champe M."/>
            <person name="George R.A."/>
            <person name="Guarin H."/>
            <person name="Kronmiller B."/>
            <person name="Pacleb J.M."/>
            <person name="Park S."/>
            <person name="Wan K.H."/>
            <person name="Rubin G.M."/>
            <person name="Celniker S.E."/>
        </authorList>
    </citation>
    <scope>NUCLEOTIDE SEQUENCE [LARGE SCALE MRNA] (ISOFORM 3)</scope>
    <scope>NUCLEOTIDE SEQUENCE [LARGE SCALE MRNA] OF 98-1007 (ISOFORM 2)</scope>
    <source>
        <strain>Berkeley</strain>
        <tissue>Embryo</tissue>
    </source>
</reference>
<reference key="5">
    <citation type="journal article" date="2004" name="Curr. Biol.">
        <title>Drosophila Nedd4 regulates endocytosis of notch and suppresses its ligand-independent activation.</title>
        <authorList>
            <person name="Sakata T."/>
            <person name="Sakaguchi H."/>
            <person name="Tsuda L."/>
            <person name="Higashitani A."/>
            <person name="Aigaki T."/>
            <person name="Matsuno K."/>
            <person name="Hayashi S."/>
        </authorList>
    </citation>
    <scope>FUNCTION</scope>
    <scope>INTERACTION WITH N</scope>
    <scope>TISSUE SPECIFICITY</scope>
    <scope>SUBCELLULAR LOCATION</scope>
</reference>
<reference key="6">
    <citation type="journal article" date="2005" name="Nat. Neurosci.">
        <title>Comm function in commissural axon guidance: cell-autonomous sorting of Robo in vivo.</title>
        <authorList>
            <person name="Keleman K."/>
            <person name="Ribeiro C."/>
            <person name="Dickson B.J."/>
        </authorList>
    </citation>
    <scope>FUNCTION</scope>
</reference>
<reference key="7">
    <citation type="journal article" date="2006" name="Dev. Cell">
        <title>The Drosophila Notch inhibitor and tumor suppressor gene lethal (2) giant discs encodes a conserved regulator of endosomal trafficking.</title>
        <authorList>
            <person name="Jaekel R."/>
            <person name="Klein T."/>
        </authorList>
    </citation>
    <scope>FUNCTION</scope>
</reference>
<reference key="8">
    <citation type="journal article" date="2006" name="Structure">
        <title>Structural determinants for high-affinity binding in a Nedd4 WW3* domain-Comm PY motif complex.</title>
        <authorList>
            <person name="Kanelis V."/>
            <person name="Bruce M.C."/>
            <person name="Skrynnikov N.R."/>
            <person name="Rotin D."/>
            <person name="Forman-Kay J.D."/>
        </authorList>
    </citation>
    <scope>STRUCTURE BY NMR OF 526-566 IN COMPLEX WITH COMM PY-MOTIF 2</scope>
</reference>
<comment type="function">
    <text evidence="6 7 8 10">Essential E3 ubiquitin-protein ligase which accepts ubiquitin from an E2 ubiquitin-conjugating enzyme in the form of a thioester and then directly transfers the ubiquitin to targeted substrates. Down-regulates Notch signaling pathway by promoting N/Notch ubiquitination, endocytosis and degradation. During development suppresses activation of the Notch signaling pathway in imaginal disk cells (PubMed:17084358).</text>
</comment>
<comment type="catalytic activity">
    <reaction evidence="1">
        <text>S-ubiquitinyl-[E2 ubiquitin-conjugating enzyme]-L-cysteine + [acceptor protein]-L-lysine = [E2 ubiquitin-conjugating enzyme]-L-cysteine + N(6)-ubiquitinyl-[acceptor protein]-L-lysine.</text>
        <dbReference type="EC" id="2.3.2.26"/>
    </reaction>
</comment>
<comment type="pathway">
    <text>Protein modification; protein ubiquitination.</text>
</comment>
<comment type="subunit">
    <text evidence="6 7 9">Interacts (via WW2 domain) with comm (via PY-motifs) (PubMed:12165468, PubMed:16531238). Interacts with N (PubMed:15620649).</text>
</comment>
<comment type="interaction">
    <interactant intactId="EBI-498113">
        <id>Q9VVI3</id>
    </interactant>
    <interactant intactId="EBI-118294">
        <id>Q24139</id>
        <label>comm</label>
    </interactant>
    <organismsDiffer>false</organismsDiffer>
    <experiments>3</experiments>
</comment>
<comment type="subcellular location">
    <subcellularLocation>
        <location evidence="7">Cytoplasm</location>
    </subcellularLocation>
</comment>
<comment type="alternative products">
    <event type="alternative splicing"/>
    <isoform>
        <id>Q9VVI3-1</id>
        <name>1</name>
        <sequence type="displayed"/>
    </isoform>
    <isoform>
        <id>Q9VVI3-2</id>
        <name>2</name>
        <sequence type="described" ref="VSP_015440 VSP_015441 VSP_015443"/>
    </isoform>
    <isoform>
        <id>Q9VVI3-3</id>
        <name>3</name>
        <sequence type="described" ref="VSP_015442"/>
    </isoform>
    <isoform>
        <id>Q9VVI3-4</id>
        <name>4</name>
        <sequence type="described" ref="VSP_015440 VSP_015441 VSP_015442"/>
    </isoform>
</comment>
<comment type="tissue specificity">
    <text evidence="6 7">Ubiquitously expressed.</text>
</comment>
<comment type="caution">
    <text evidence="13 14">According to some authors (PubMed:12165468) it is involved in axon guidance by promoting ubiquitination of comm and subsequent endocytosis of the comm/robo complex. However, according to others (PubMed:15657595), it is not the case.</text>
</comment>
<comment type="sequence caution" evidence="12">
    <conflict type="erroneous initiation">
        <sequence resource="EMBL-CDS" id="AAL13848"/>
    </conflict>
</comment>